<sequence>MSVISMKQLLEAGVHFGHQTRRWNPKMAEYIFTERNGIYIIDLQKTVKKVEEAYYFLREVAMNGQGVLFVGTKKQAQDSIREEAQRADQYYVNARWLGGMLTNFKTIKGRINRLKELTKMEEEGVFDVLPKKEVTKLRAEKEKLEKYLGGIKEMKELPGALFVVDPRKERIAVLEARRLGIPVVAIVDTNCDPDEVDYVIPGNDDAIRAVKLIASKMADAIIEGRQGEQLSVESTAQEQVEETAQEETAVEA</sequence>
<organism>
    <name type="scientific">Acetivibrio thermocellus (strain ATCC 27405 / DSM 1237 / JCM 9322 / NBRC 103400 / NCIMB 10682 / NRRL B-4536 / VPI 7372)</name>
    <name type="common">Clostridium thermocellum</name>
    <dbReference type="NCBI Taxonomy" id="203119"/>
    <lineage>
        <taxon>Bacteria</taxon>
        <taxon>Bacillati</taxon>
        <taxon>Bacillota</taxon>
        <taxon>Clostridia</taxon>
        <taxon>Eubacteriales</taxon>
        <taxon>Oscillospiraceae</taxon>
        <taxon>Acetivibrio</taxon>
    </lineage>
</organism>
<keyword id="KW-1185">Reference proteome</keyword>
<keyword id="KW-0687">Ribonucleoprotein</keyword>
<keyword id="KW-0689">Ribosomal protein</keyword>
<gene>
    <name evidence="1" type="primary">rpsB</name>
    <name type="ordered locus">Cthe_1006</name>
</gene>
<feature type="chain" id="PRO_1000003940" description="Small ribosomal subunit protein uS2">
    <location>
        <begin position="1"/>
        <end position="252"/>
    </location>
</feature>
<feature type="region of interest" description="Disordered" evidence="2">
    <location>
        <begin position="231"/>
        <end position="252"/>
    </location>
</feature>
<feature type="compositionally biased region" description="Acidic residues" evidence="2">
    <location>
        <begin position="239"/>
        <end position="252"/>
    </location>
</feature>
<protein>
    <recommendedName>
        <fullName evidence="1">Small ribosomal subunit protein uS2</fullName>
    </recommendedName>
    <alternativeName>
        <fullName evidence="3">30S ribosomal protein S2</fullName>
    </alternativeName>
</protein>
<proteinExistence type="inferred from homology"/>
<name>RS2_ACET2</name>
<accession>A3DE59</accession>
<evidence type="ECO:0000255" key="1">
    <source>
        <dbReference type="HAMAP-Rule" id="MF_00291"/>
    </source>
</evidence>
<evidence type="ECO:0000256" key="2">
    <source>
        <dbReference type="SAM" id="MobiDB-lite"/>
    </source>
</evidence>
<evidence type="ECO:0000305" key="3"/>
<dbReference type="EMBL" id="CP000568">
    <property type="protein sequence ID" value="ABN52238.1"/>
    <property type="molecule type" value="Genomic_DNA"/>
</dbReference>
<dbReference type="RefSeq" id="WP_003515567.1">
    <property type="nucleotide sequence ID" value="NC_009012.1"/>
</dbReference>
<dbReference type="SMR" id="A3DE59"/>
<dbReference type="STRING" id="203119.Cthe_1006"/>
<dbReference type="GeneID" id="35805176"/>
<dbReference type="KEGG" id="cth:Cthe_1006"/>
<dbReference type="eggNOG" id="COG0052">
    <property type="taxonomic scope" value="Bacteria"/>
</dbReference>
<dbReference type="HOGENOM" id="CLU_040318_1_2_9"/>
<dbReference type="OrthoDB" id="9808036at2"/>
<dbReference type="Proteomes" id="UP000002145">
    <property type="component" value="Chromosome"/>
</dbReference>
<dbReference type="GO" id="GO:0022627">
    <property type="term" value="C:cytosolic small ribosomal subunit"/>
    <property type="evidence" value="ECO:0007669"/>
    <property type="project" value="TreeGrafter"/>
</dbReference>
<dbReference type="GO" id="GO:0003735">
    <property type="term" value="F:structural constituent of ribosome"/>
    <property type="evidence" value="ECO:0007669"/>
    <property type="project" value="InterPro"/>
</dbReference>
<dbReference type="GO" id="GO:0006412">
    <property type="term" value="P:translation"/>
    <property type="evidence" value="ECO:0007669"/>
    <property type="project" value="UniProtKB-UniRule"/>
</dbReference>
<dbReference type="CDD" id="cd01425">
    <property type="entry name" value="RPS2"/>
    <property type="match status" value="1"/>
</dbReference>
<dbReference type="FunFam" id="1.10.287.610:FF:000001">
    <property type="entry name" value="30S ribosomal protein S2"/>
    <property type="match status" value="1"/>
</dbReference>
<dbReference type="Gene3D" id="3.40.50.10490">
    <property type="entry name" value="Glucose-6-phosphate isomerase like protein, domain 1"/>
    <property type="match status" value="1"/>
</dbReference>
<dbReference type="Gene3D" id="1.10.287.610">
    <property type="entry name" value="Helix hairpin bin"/>
    <property type="match status" value="1"/>
</dbReference>
<dbReference type="HAMAP" id="MF_00291_B">
    <property type="entry name" value="Ribosomal_uS2_B"/>
    <property type="match status" value="1"/>
</dbReference>
<dbReference type="InterPro" id="IPR001865">
    <property type="entry name" value="Ribosomal_uS2"/>
</dbReference>
<dbReference type="InterPro" id="IPR005706">
    <property type="entry name" value="Ribosomal_uS2_bac/mit/plastid"/>
</dbReference>
<dbReference type="InterPro" id="IPR018130">
    <property type="entry name" value="Ribosomal_uS2_CS"/>
</dbReference>
<dbReference type="InterPro" id="IPR023591">
    <property type="entry name" value="Ribosomal_uS2_flav_dom_sf"/>
</dbReference>
<dbReference type="NCBIfam" id="TIGR01011">
    <property type="entry name" value="rpsB_bact"/>
    <property type="match status" value="1"/>
</dbReference>
<dbReference type="PANTHER" id="PTHR12534">
    <property type="entry name" value="30S RIBOSOMAL PROTEIN S2 PROKARYOTIC AND ORGANELLAR"/>
    <property type="match status" value="1"/>
</dbReference>
<dbReference type="PANTHER" id="PTHR12534:SF0">
    <property type="entry name" value="SMALL RIBOSOMAL SUBUNIT PROTEIN US2M"/>
    <property type="match status" value="1"/>
</dbReference>
<dbReference type="Pfam" id="PF00318">
    <property type="entry name" value="Ribosomal_S2"/>
    <property type="match status" value="1"/>
</dbReference>
<dbReference type="PRINTS" id="PR00395">
    <property type="entry name" value="RIBOSOMALS2"/>
</dbReference>
<dbReference type="SUPFAM" id="SSF52313">
    <property type="entry name" value="Ribosomal protein S2"/>
    <property type="match status" value="1"/>
</dbReference>
<dbReference type="PROSITE" id="PS00962">
    <property type="entry name" value="RIBOSOMAL_S2_1"/>
    <property type="match status" value="1"/>
</dbReference>
<dbReference type="PROSITE" id="PS00963">
    <property type="entry name" value="RIBOSOMAL_S2_2"/>
    <property type="match status" value="1"/>
</dbReference>
<comment type="similarity">
    <text evidence="1">Belongs to the universal ribosomal protein uS2 family.</text>
</comment>
<reference key="1">
    <citation type="submission" date="2007-02" db="EMBL/GenBank/DDBJ databases">
        <title>Complete sequence of Clostridium thermocellum ATCC 27405.</title>
        <authorList>
            <consortium name="US DOE Joint Genome Institute"/>
            <person name="Copeland A."/>
            <person name="Lucas S."/>
            <person name="Lapidus A."/>
            <person name="Barry K."/>
            <person name="Detter J.C."/>
            <person name="Glavina del Rio T."/>
            <person name="Hammon N."/>
            <person name="Israni S."/>
            <person name="Dalin E."/>
            <person name="Tice H."/>
            <person name="Pitluck S."/>
            <person name="Chertkov O."/>
            <person name="Brettin T."/>
            <person name="Bruce D."/>
            <person name="Han C."/>
            <person name="Tapia R."/>
            <person name="Gilna P."/>
            <person name="Schmutz J."/>
            <person name="Larimer F."/>
            <person name="Land M."/>
            <person name="Hauser L."/>
            <person name="Kyrpides N."/>
            <person name="Mikhailova N."/>
            <person name="Wu J.H.D."/>
            <person name="Newcomb M."/>
            <person name="Richardson P."/>
        </authorList>
    </citation>
    <scope>NUCLEOTIDE SEQUENCE [LARGE SCALE GENOMIC DNA]</scope>
    <source>
        <strain>ATCC 27405 / DSM 1237 / JCM 9322 / NBRC 103400 / NCIMB 10682 / NRRL B-4536 / VPI 7372</strain>
    </source>
</reference>